<protein>
    <recommendedName>
        <fullName>Probable arabinosyltransferase B</fullName>
        <ecNumber>2.4.2.-</ecNumber>
    </recommendedName>
</protein>
<name>EMBB_MYCLE</name>
<comment type="function">
    <text evidence="1">Arabinosyl transferase responsible for the polymerization of arabinose into the arabinan of arabinogalactan.</text>
</comment>
<comment type="subcellular location">
    <subcellularLocation>
        <location evidence="3">Cell membrane</location>
        <topology evidence="3">Multi-pass membrane protein</topology>
    </subcellularLocation>
</comment>
<comment type="similarity">
    <text evidence="3">Belongs to the emb family.</text>
</comment>
<dbReference type="EC" id="2.4.2.-"/>
<dbReference type="EMBL" id="AL583917">
    <property type="protein sequence ID" value="CAC29612.1"/>
    <property type="molecule type" value="Genomic_DNA"/>
</dbReference>
<dbReference type="PIR" id="H86921">
    <property type="entry name" value="H86921"/>
</dbReference>
<dbReference type="RefSeq" id="NP_301201.1">
    <property type="nucleotide sequence ID" value="NC_002677.1"/>
</dbReference>
<dbReference type="RefSeq" id="WP_010907526.1">
    <property type="nucleotide sequence ID" value="NC_002677.1"/>
</dbReference>
<dbReference type="SMR" id="Q9CDA9"/>
<dbReference type="STRING" id="272631.gene:17573916"/>
<dbReference type="CAZy" id="GT53">
    <property type="family name" value="Glycosyltransferase Family 53"/>
</dbReference>
<dbReference type="KEGG" id="mle:ML0104"/>
<dbReference type="PATRIC" id="fig|272631.5.peg.165"/>
<dbReference type="Leproma" id="ML0104"/>
<dbReference type="eggNOG" id="COG1807">
    <property type="taxonomic scope" value="Bacteria"/>
</dbReference>
<dbReference type="HOGENOM" id="CLU_010182_0_0_11"/>
<dbReference type="OrthoDB" id="3584570at2"/>
<dbReference type="Proteomes" id="UP000000806">
    <property type="component" value="Chromosome"/>
</dbReference>
<dbReference type="GO" id="GO:0005886">
    <property type="term" value="C:plasma membrane"/>
    <property type="evidence" value="ECO:0007669"/>
    <property type="project" value="UniProtKB-SubCell"/>
</dbReference>
<dbReference type="GO" id="GO:0052636">
    <property type="term" value="F:arabinosyltransferase activity"/>
    <property type="evidence" value="ECO:0007669"/>
    <property type="project" value="InterPro"/>
</dbReference>
<dbReference type="GO" id="GO:0071766">
    <property type="term" value="P:Actinobacterium-type cell wall biogenesis"/>
    <property type="evidence" value="ECO:0007669"/>
    <property type="project" value="InterPro"/>
</dbReference>
<dbReference type="GO" id="GO:0071555">
    <property type="term" value="P:cell wall organization"/>
    <property type="evidence" value="ECO:0007669"/>
    <property type="project" value="UniProtKB-KW"/>
</dbReference>
<dbReference type="Gene3D" id="3.40.190.160">
    <property type="match status" value="1"/>
</dbReference>
<dbReference type="Gene3D" id="2.60.120.610">
    <property type="entry name" value="arabinofuranosyltransferase like domain"/>
    <property type="match status" value="1"/>
</dbReference>
<dbReference type="Gene3D" id="2.60.120.940">
    <property type="entry name" value="EmbC, C-terminal domain, subdomain 2"/>
    <property type="match status" value="1"/>
</dbReference>
<dbReference type="InterPro" id="IPR032731">
    <property type="entry name" value="Arabino_trans_C"/>
</dbReference>
<dbReference type="InterPro" id="IPR042486">
    <property type="entry name" value="Arabino_trans_C_2"/>
</dbReference>
<dbReference type="InterPro" id="IPR007680">
    <property type="entry name" value="Arabino_trans_central"/>
</dbReference>
<dbReference type="InterPro" id="IPR040920">
    <property type="entry name" value="Arabino_trans_N"/>
</dbReference>
<dbReference type="InterPro" id="IPR027451">
    <property type="entry name" value="EmbABC_dom1"/>
</dbReference>
<dbReference type="Pfam" id="PF14896">
    <property type="entry name" value="Arabino_trans_C"/>
    <property type="match status" value="1"/>
</dbReference>
<dbReference type="Pfam" id="PF17689">
    <property type="entry name" value="Arabino_trans_N"/>
    <property type="match status" value="1"/>
</dbReference>
<dbReference type="Pfam" id="PF04602">
    <property type="entry name" value="Arabinose_trans"/>
    <property type="match status" value="1"/>
</dbReference>
<sequence length="1083" mass="117158">MSVIYRAHRVAIANRTASRNVRVARWVAAIAGLIGFVSSVVTPLLPVVQTTATLNWPQNGQLNSVTAPLISLTPVDITATVPCAVVAALPPSGGVVLGTAPKQGKDANLNALFIDVNSQRVDVTDRNVVILSVPRNQVAGDAGAPGCSSIEVTSTHAGTFATFVGVTDSAGNPLRGGFPDPNLRPQIVGVFTDLTGGAPSGLRLSATIDTRFSSTPTTLKRFAMMLAIITTVGALVALWRLDQLDGRRMRRLIPARWSMFTLVDVAVIFGFLLWHVIGANSSDDGYQMQMARTADHSGYMANYFRWFGSPEDPFGWYYNLLALMIHVSDASMWIRLPDLICGVACWLLLSREVLPRLGPAIVGFKPALWAAGLVLLAAWMPFNNGLRPEGQIALGALITYVLIERAITYGRMTPVALATLTAAFTIGIQPTGLIAVAALLAGGRPMLYILVRRHRAVGAWPLVAPLLAAGTVVLTVVFAEQTLSTVLEATKVRTAIGPAQAWYTENLRYYYLILPTVDGSLSRRFGFLITALCLFTAVLITLRRKQIPGVARGPAWRLIGTILGTMFFLTFAPTKWVHHFGLFAALGAAVAALTTVLVSHEVLRWSRNRMAFLAALLFVMTLCFATTNGWWYVSSYGVPFNSAMPRIDGITFSTIFFILFAIVALYAYYLHFTNTGHGEGRLIRTLTVSFWAPIPFAAGLMTLVFIGSMVAGIVRQYPTYSNGWANIRALTGGCGLADDVLVEPDSNAGYMTALPSNYGPLGPLGGVNAIGFTANGVPEHTVAEAIRITPNQPGTDYDWEAPTKLKAPGINGSVVPLPYGLNPNKVPIAGTYTTGAQQQSRLTSAWYQLPKPDDRHPLVVVTAAGKITGNSVLHGHTYGQTVVLEYGDPGPNGGLVPAGRLVPDDLYGEQPKAWRNLRFARSQMPFDAVAVRVVAENLSLTPEDWIAVTPPRVPELRSLQEYVGSSQPVLLDWEVGLAFPCQQPMLHANGVTDIPKFRITPDYSAKKIDTDTWEDGANGGLLGITDLLLRAHVMSTYLARDWGRDWGSLRKFDPLVDTHPAQLDLDTATRSGWWSPGKIRIKP</sequence>
<evidence type="ECO:0000250" key="1"/>
<evidence type="ECO:0000255" key="2"/>
<evidence type="ECO:0000305" key="3"/>
<accession>Q9CDA9</accession>
<gene>
    <name type="primary">embB</name>
    <name type="ordered locus">ML0104</name>
</gene>
<organism>
    <name type="scientific">Mycobacterium leprae (strain TN)</name>
    <dbReference type="NCBI Taxonomy" id="272631"/>
    <lineage>
        <taxon>Bacteria</taxon>
        <taxon>Bacillati</taxon>
        <taxon>Actinomycetota</taxon>
        <taxon>Actinomycetes</taxon>
        <taxon>Mycobacteriales</taxon>
        <taxon>Mycobacteriaceae</taxon>
        <taxon>Mycobacterium</taxon>
    </lineage>
</organism>
<reference key="1">
    <citation type="journal article" date="2001" name="Nature">
        <title>Massive gene decay in the leprosy bacillus.</title>
        <authorList>
            <person name="Cole S.T."/>
            <person name="Eiglmeier K."/>
            <person name="Parkhill J."/>
            <person name="James K.D."/>
            <person name="Thomson N.R."/>
            <person name="Wheeler P.R."/>
            <person name="Honore N."/>
            <person name="Garnier T."/>
            <person name="Churcher C.M."/>
            <person name="Harris D.E."/>
            <person name="Mungall K.L."/>
            <person name="Basham D."/>
            <person name="Brown D."/>
            <person name="Chillingworth T."/>
            <person name="Connor R."/>
            <person name="Davies R.M."/>
            <person name="Devlin K."/>
            <person name="Duthoy S."/>
            <person name="Feltwell T."/>
            <person name="Fraser A."/>
            <person name="Hamlin N."/>
            <person name="Holroyd S."/>
            <person name="Hornsby T."/>
            <person name="Jagels K."/>
            <person name="Lacroix C."/>
            <person name="Maclean J."/>
            <person name="Moule S."/>
            <person name="Murphy L.D."/>
            <person name="Oliver K."/>
            <person name="Quail M.A."/>
            <person name="Rajandream M.A."/>
            <person name="Rutherford K.M."/>
            <person name="Rutter S."/>
            <person name="Seeger K."/>
            <person name="Simon S."/>
            <person name="Simmonds M."/>
            <person name="Skelton J."/>
            <person name="Squares R."/>
            <person name="Squares S."/>
            <person name="Stevens K."/>
            <person name="Taylor K."/>
            <person name="Whitehead S."/>
            <person name="Woodward J.R."/>
            <person name="Barrell B.G."/>
        </authorList>
    </citation>
    <scope>NUCLEOTIDE SEQUENCE [LARGE SCALE GENOMIC DNA]</scope>
    <source>
        <strain>TN</strain>
    </source>
</reference>
<feature type="chain" id="PRO_0000220567" description="Probable arabinosyltransferase B">
    <location>
        <begin position="1"/>
        <end position="1083"/>
    </location>
</feature>
<feature type="transmembrane region" description="Helical" evidence="2">
    <location>
        <begin position="23"/>
        <end position="45"/>
    </location>
</feature>
<feature type="transmembrane region" description="Helical" evidence="2">
    <location>
        <begin position="222"/>
        <end position="239"/>
    </location>
</feature>
<feature type="transmembrane region" description="Helical" evidence="2">
    <location>
        <begin position="252"/>
        <end position="274"/>
    </location>
</feature>
<feature type="transmembrane region" description="Helical" evidence="2">
    <location>
        <begin position="331"/>
        <end position="350"/>
    </location>
</feature>
<feature type="transmembrane region" description="Helical" evidence="2">
    <location>
        <begin position="357"/>
        <end position="379"/>
    </location>
</feature>
<feature type="transmembrane region" description="Helical" evidence="2">
    <location>
        <begin position="421"/>
        <end position="443"/>
    </location>
</feature>
<feature type="transmembrane region" description="Helical" evidence="2">
    <location>
        <begin position="456"/>
        <end position="478"/>
    </location>
</feature>
<feature type="transmembrane region" description="Helical" evidence="2">
    <location>
        <begin position="525"/>
        <end position="542"/>
    </location>
</feature>
<feature type="transmembrane region" description="Helical" evidence="2">
    <location>
        <begin position="555"/>
        <end position="572"/>
    </location>
</feature>
<feature type="transmembrane region" description="Helical" evidence="2">
    <location>
        <begin position="576"/>
        <end position="598"/>
    </location>
</feature>
<feature type="transmembrane region" description="Helical" evidence="2">
    <location>
        <begin position="611"/>
        <end position="633"/>
    </location>
</feature>
<feature type="transmembrane region" description="Helical" evidence="2">
    <location>
        <begin position="648"/>
        <end position="670"/>
    </location>
</feature>
<feature type="transmembrane region" description="Helical" evidence="2">
    <location>
        <begin position="690"/>
        <end position="712"/>
    </location>
</feature>
<proteinExistence type="inferred from homology"/>
<keyword id="KW-1003">Cell membrane</keyword>
<keyword id="KW-0961">Cell wall biogenesis/degradation</keyword>
<keyword id="KW-0328">Glycosyltransferase</keyword>
<keyword id="KW-0472">Membrane</keyword>
<keyword id="KW-1185">Reference proteome</keyword>
<keyword id="KW-0808">Transferase</keyword>
<keyword id="KW-0812">Transmembrane</keyword>
<keyword id="KW-1133">Transmembrane helix</keyword>